<evidence type="ECO:0000250" key="1">
    <source>
        <dbReference type="UniProtKB" id="Q9Y2T3"/>
    </source>
</evidence>
<evidence type="ECO:0000305" key="2"/>
<evidence type="ECO:0007744" key="3">
    <source>
    </source>
</evidence>
<keyword id="KW-0903">Direct protein sequencing</keyword>
<keyword id="KW-0378">Hydrolase</keyword>
<keyword id="KW-0479">Metal-binding</keyword>
<keyword id="KW-0597">Phosphoprotein</keyword>
<keyword id="KW-1185">Reference proteome</keyword>
<keyword id="KW-0862">Zinc</keyword>
<reference key="1">
    <citation type="submission" date="1999-05" db="EMBL/GenBank/DDBJ databases">
        <title>Molecular cloning and expression of rat guanine aminohydrolase.</title>
        <authorList>
            <person name="Seong Y.S."/>
            <person name="Kimm S.W."/>
            <person name="Park J.B."/>
        </authorList>
    </citation>
    <scope>NUCLEOTIDE SEQUENCE [MRNA]</scope>
    <source>
        <strain>Sprague-Dawley</strain>
    </source>
</reference>
<reference key="2">
    <citation type="submission" date="2007-04" db="UniProtKB">
        <authorList>
            <person name="Lubec G."/>
            <person name="Chen W.-Q."/>
        </authorList>
    </citation>
    <scope>PROTEIN SEQUENCE OF 114-126; 325-344 AND 385-403</scope>
    <scope>IDENTIFICATION BY MASS SPECTROMETRY</scope>
    <source>
        <strain>Sprague-Dawley</strain>
        <tissue>Hippocampus</tissue>
    </source>
</reference>
<reference key="3">
    <citation type="journal article" date="2012" name="Nat. Commun.">
        <title>Quantitative maps of protein phosphorylation sites across 14 different rat organs and tissues.</title>
        <authorList>
            <person name="Lundby A."/>
            <person name="Secher A."/>
            <person name="Lage K."/>
            <person name="Nordsborg N.B."/>
            <person name="Dmytriyev A."/>
            <person name="Lundby C."/>
            <person name="Olsen J.V."/>
        </authorList>
    </citation>
    <scope>PHOSPHORYLATION [LARGE SCALE ANALYSIS] AT SER-453</scope>
    <scope>IDENTIFICATION BY MASS SPECTROMETRY [LARGE SCALE ANALYSIS]</scope>
</reference>
<dbReference type="EC" id="3.5.4.3" evidence="1"/>
<dbReference type="EMBL" id="AF026472">
    <property type="protein sequence ID" value="AAD15629.2"/>
    <property type="molecule type" value="mRNA"/>
</dbReference>
<dbReference type="SMR" id="Q9WTT6"/>
<dbReference type="ELM" id="Q9WTT6"/>
<dbReference type="FunCoup" id="Q9WTT6">
    <property type="interactions" value="734"/>
</dbReference>
<dbReference type="IntAct" id="Q9WTT6">
    <property type="interactions" value="1"/>
</dbReference>
<dbReference type="MINT" id="Q9WTT6"/>
<dbReference type="STRING" id="10116.ENSRNOP00000024775"/>
<dbReference type="ChEMBL" id="CHEMBL3308947"/>
<dbReference type="MEROPS" id="M38.981"/>
<dbReference type="GlyGen" id="Q9WTT6">
    <property type="glycosylation" value="1 site, 1 O-linked glycan (1 site)"/>
</dbReference>
<dbReference type="iPTMnet" id="Q9WTT6"/>
<dbReference type="PhosphoSitePlus" id="Q9WTT6"/>
<dbReference type="SwissPalm" id="Q9WTT6"/>
<dbReference type="PaxDb" id="10116-ENSRNOP00000024775"/>
<dbReference type="UCSC" id="RGD:621617">
    <property type="organism name" value="rat"/>
</dbReference>
<dbReference type="AGR" id="RGD:621617"/>
<dbReference type="RGD" id="621617">
    <property type="gene designation" value="Gda"/>
</dbReference>
<dbReference type="eggNOG" id="KOG3968">
    <property type="taxonomic scope" value="Eukaryota"/>
</dbReference>
<dbReference type="InParanoid" id="Q9WTT6"/>
<dbReference type="PhylomeDB" id="Q9WTT6"/>
<dbReference type="Reactome" id="R-RNO-74259">
    <property type="pathway name" value="Purine catabolism"/>
</dbReference>
<dbReference type="UniPathway" id="UPA00603">
    <property type="reaction ID" value="UER00660"/>
</dbReference>
<dbReference type="PRO" id="PR:Q9WTT6"/>
<dbReference type="Proteomes" id="UP000002494">
    <property type="component" value="Unplaced"/>
</dbReference>
<dbReference type="GO" id="GO:0005829">
    <property type="term" value="C:cytosol"/>
    <property type="evidence" value="ECO:0000266"/>
    <property type="project" value="RGD"/>
</dbReference>
<dbReference type="GO" id="GO:0098794">
    <property type="term" value="C:postsynapse"/>
    <property type="evidence" value="ECO:0000314"/>
    <property type="project" value="SynGO"/>
</dbReference>
<dbReference type="GO" id="GO:0099524">
    <property type="term" value="C:postsynaptic cytosol"/>
    <property type="evidence" value="ECO:0000314"/>
    <property type="project" value="SynGO"/>
</dbReference>
<dbReference type="GO" id="GO:0099523">
    <property type="term" value="C:presynaptic cytosol"/>
    <property type="evidence" value="ECO:0000314"/>
    <property type="project" value="SynGO"/>
</dbReference>
<dbReference type="GO" id="GO:0008892">
    <property type="term" value="F:guanine deaminase activity"/>
    <property type="evidence" value="ECO:0000314"/>
    <property type="project" value="RGD"/>
</dbReference>
<dbReference type="GO" id="GO:0008270">
    <property type="term" value="F:zinc ion binding"/>
    <property type="evidence" value="ECO:0000318"/>
    <property type="project" value="GO_Central"/>
</dbReference>
<dbReference type="GO" id="GO:0000255">
    <property type="term" value="P:allantoin metabolic process"/>
    <property type="evidence" value="ECO:0000266"/>
    <property type="project" value="RGD"/>
</dbReference>
<dbReference type="GO" id="GO:0043605">
    <property type="term" value="P:amide catabolic process"/>
    <property type="evidence" value="ECO:0000266"/>
    <property type="project" value="RGD"/>
</dbReference>
<dbReference type="GO" id="GO:0006161">
    <property type="term" value="P:deoxyguanosine catabolic process"/>
    <property type="evidence" value="ECO:0000266"/>
    <property type="project" value="RGD"/>
</dbReference>
<dbReference type="GO" id="GO:0046055">
    <property type="term" value="P:dGMP catabolic process"/>
    <property type="evidence" value="ECO:0000266"/>
    <property type="project" value="RGD"/>
</dbReference>
<dbReference type="GO" id="GO:0046038">
    <property type="term" value="P:GMP catabolic process"/>
    <property type="evidence" value="ECO:0000266"/>
    <property type="project" value="RGD"/>
</dbReference>
<dbReference type="GO" id="GO:0006147">
    <property type="term" value="P:guanine catabolic process"/>
    <property type="evidence" value="ECO:0000266"/>
    <property type="project" value="RGD"/>
</dbReference>
<dbReference type="GO" id="GO:0046098">
    <property type="term" value="P:guanine metabolic process"/>
    <property type="evidence" value="ECO:0000318"/>
    <property type="project" value="GO_Central"/>
</dbReference>
<dbReference type="GO" id="GO:0031116">
    <property type="term" value="P:positive regulation of microtubule polymerization"/>
    <property type="evidence" value="ECO:0000314"/>
    <property type="project" value="CACAO"/>
</dbReference>
<dbReference type="CDD" id="cd01303">
    <property type="entry name" value="GDEase"/>
    <property type="match status" value="1"/>
</dbReference>
<dbReference type="FunFam" id="3.20.20.140:FF:000021">
    <property type="entry name" value="Guanine deaminase"/>
    <property type="match status" value="1"/>
</dbReference>
<dbReference type="Gene3D" id="3.20.20.140">
    <property type="entry name" value="Metal-dependent hydrolases"/>
    <property type="match status" value="1"/>
</dbReference>
<dbReference type="Gene3D" id="2.30.40.10">
    <property type="entry name" value="Urease, subunit C, domain 1"/>
    <property type="match status" value="1"/>
</dbReference>
<dbReference type="InterPro" id="IPR006680">
    <property type="entry name" value="Amidohydro-rel"/>
</dbReference>
<dbReference type="InterPro" id="IPR014311">
    <property type="entry name" value="Guanine_deaminase"/>
</dbReference>
<dbReference type="InterPro" id="IPR011059">
    <property type="entry name" value="Metal-dep_hydrolase_composite"/>
</dbReference>
<dbReference type="InterPro" id="IPR032466">
    <property type="entry name" value="Metal_Hydrolase"/>
</dbReference>
<dbReference type="InterPro" id="IPR051607">
    <property type="entry name" value="Metallo-dep_hydrolases"/>
</dbReference>
<dbReference type="NCBIfam" id="TIGR02967">
    <property type="entry name" value="guan_deamin"/>
    <property type="match status" value="1"/>
</dbReference>
<dbReference type="PANTHER" id="PTHR11271">
    <property type="entry name" value="GUANINE DEAMINASE"/>
    <property type="match status" value="1"/>
</dbReference>
<dbReference type="PANTHER" id="PTHR11271:SF6">
    <property type="entry name" value="GUANINE DEAMINASE"/>
    <property type="match status" value="1"/>
</dbReference>
<dbReference type="Pfam" id="PF01979">
    <property type="entry name" value="Amidohydro_1"/>
    <property type="match status" value="1"/>
</dbReference>
<dbReference type="SUPFAM" id="SSF51338">
    <property type="entry name" value="Composite domain of metallo-dependent hydrolases"/>
    <property type="match status" value="1"/>
</dbReference>
<dbReference type="SUPFAM" id="SSF51556">
    <property type="entry name" value="Metallo-dependent hydrolases"/>
    <property type="match status" value="1"/>
</dbReference>
<comment type="function">
    <text evidence="1">Catalyzes the hydrolytic deamination of guanine, producing xanthine and ammonia.</text>
</comment>
<comment type="catalytic activity">
    <reaction evidence="1">
        <text>guanine + H2O + H(+) = xanthine + NH4(+)</text>
        <dbReference type="Rhea" id="RHEA:14665"/>
        <dbReference type="ChEBI" id="CHEBI:15377"/>
        <dbReference type="ChEBI" id="CHEBI:15378"/>
        <dbReference type="ChEBI" id="CHEBI:16235"/>
        <dbReference type="ChEBI" id="CHEBI:17712"/>
        <dbReference type="ChEBI" id="CHEBI:28938"/>
        <dbReference type="EC" id="3.5.4.3"/>
    </reaction>
</comment>
<comment type="cofactor">
    <cofactor evidence="1">
        <name>Zn(2+)</name>
        <dbReference type="ChEBI" id="CHEBI:29105"/>
    </cofactor>
    <text evidence="1">Binds 1 zinc ion per subunit.</text>
</comment>
<comment type="pathway">
    <text evidence="1">Purine metabolism; guanine degradation; xanthine from guanine: step 1/1.</text>
</comment>
<comment type="subunit">
    <text evidence="1">Homodimer.</text>
</comment>
<comment type="similarity">
    <text evidence="2">Belongs to the metallo-dependent hydrolases superfamily. ATZ/TRZ family.</text>
</comment>
<proteinExistence type="evidence at protein level"/>
<gene>
    <name type="primary">Gda</name>
</gene>
<sequence length="454" mass="51016">MCAARRRELALIFRGTFVHSTWTCPMEVLRDHLLGVSDSGKIVFLEESSQQEKLAKEWCFKPCEIRELSHHEFFMPGLVDTHIHAPQYAFAGSNVDLPLLDWLNKYTFPTEKRFQSTDVAEEVYTRVVRRTLKNGTTTACYFGTIHTDSSLILAEITDKFGQRAFVGKVCMDLNNTVPEYKETTEESVKETERFVSEMLQKNYSRVKPIVTPRFSLSCTETLMSELGNIAKTHDLYIQSHISENREEIEAVKSLYPGYKNYTDVYDKNNLLTNKTVMAHGCYLSEEELNVFSERGASIAHCPNSNLSLSSGLLNVLDVLKHKVKIGLGTDVAGGYSYSMLDAIRRAVMVSNVLLINKVNEKSLTLKEVFRLATLGGSQALGLDREIGNFEVGKDFDALLINPRASDSPIDLFCGDFVGDISEAVIQKFLYLGDDRNIEEVYVGGKQVVPFSSSV</sequence>
<name>GUAD_RAT</name>
<accession>Q9WTT6</accession>
<protein>
    <recommendedName>
        <fullName>Guanine deaminase</fullName>
        <shortName>Guanase</shortName>
        <shortName>Guanine aminase</shortName>
        <ecNumber evidence="1">3.5.4.3</ecNumber>
    </recommendedName>
    <alternativeName>
        <fullName>Guanine aminohydrolase</fullName>
        <shortName>GAH</shortName>
    </alternativeName>
</protein>
<organism>
    <name type="scientific">Rattus norvegicus</name>
    <name type="common">Rat</name>
    <dbReference type="NCBI Taxonomy" id="10116"/>
    <lineage>
        <taxon>Eukaryota</taxon>
        <taxon>Metazoa</taxon>
        <taxon>Chordata</taxon>
        <taxon>Craniata</taxon>
        <taxon>Vertebrata</taxon>
        <taxon>Euteleostomi</taxon>
        <taxon>Mammalia</taxon>
        <taxon>Eutheria</taxon>
        <taxon>Euarchontoglires</taxon>
        <taxon>Glires</taxon>
        <taxon>Rodentia</taxon>
        <taxon>Myomorpha</taxon>
        <taxon>Muroidea</taxon>
        <taxon>Muridae</taxon>
        <taxon>Murinae</taxon>
        <taxon>Rattus</taxon>
    </lineage>
</organism>
<feature type="chain" id="PRO_0000122300" description="Guanine deaminase">
    <location>
        <begin position="1"/>
        <end position="454"/>
    </location>
</feature>
<feature type="binding site" evidence="1">
    <location>
        <position position="82"/>
    </location>
    <ligand>
        <name>Zn(2+)</name>
        <dbReference type="ChEBI" id="CHEBI:29105"/>
    </ligand>
</feature>
<feature type="binding site" evidence="1">
    <location>
        <begin position="84"/>
        <end position="87"/>
    </location>
    <ligand>
        <name>substrate</name>
    </ligand>
</feature>
<feature type="binding site" evidence="1">
    <location>
        <position position="84"/>
    </location>
    <ligand>
        <name>Zn(2+)</name>
        <dbReference type="ChEBI" id="CHEBI:29105"/>
    </ligand>
</feature>
<feature type="binding site" evidence="1">
    <location>
        <begin position="213"/>
        <end position="214"/>
    </location>
    <ligand>
        <name>substrate</name>
    </ligand>
</feature>
<feature type="binding site" evidence="1">
    <location>
        <begin position="240"/>
        <end position="243"/>
    </location>
    <ligand>
        <name>substrate</name>
    </ligand>
</feature>
<feature type="binding site" evidence="1">
    <location>
        <position position="240"/>
    </location>
    <ligand>
        <name>Zn(2+)</name>
        <dbReference type="ChEBI" id="CHEBI:29105"/>
    </ligand>
</feature>
<feature type="binding site" evidence="1">
    <location>
        <position position="330"/>
    </location>
    <ligand>
        <name>substrate</name>
    </ligand>
</feature>
<feature type="binding site" evidence="1">
    <location>
        <position position="330"/>
    </location>
    <ligand>
        <name>Zn(2+)</name>
        <dbReference type="ChEBI" id="CHEBI:29105"/>
    </ligand>
</feature>
<feature type="modified residue" description="Phosphoserine" evidence="3">
    <location>
        <position position="453"/>
    </location>
</feature>